<proteinExistence type="inferred from homology"/>
<name>QUEA_PSYWF</name>
<sequence length="390" mass="43537">MTQPLSQDQHDSSSNMPTDNAETQGYLSVADYDYDLPDEYIARYPLAERSASRLMYLPAQKENTAVIQDRQFSDLPELLQAGDLIVFNDTKVMKARLFGQKDTGGKVEVLVERLTDDTEFTTDESGQSFDNVALCHVRASKAPKLGQRLVLGDGNIECVMIGRHENLFILSFKNPILPDLEQYGELPIPPYFERHADETDNVRYQTVFHDPTKLASVAAPTASLHFDDKVLKQLADKGINTAYVTLHVGAGTFAPVKTDNLLNHTMHSEYANLPQATADLINQTHQNGNKVIAIGTTVTRVLETAYQKTADEHGHISTWSGDTDIFIYPGFKFGVIDKLLTNFHLPKSTLLMLVSAFAGKANIEQAYEHAVAQKYRFFSYGDAMLLERNL</sequence>
<keyword id="KW-0963">Cytoplasm</keyword>
<keyword id="KW-0671">Queuosine biosynthesis</keyword>
<keyword id="KW-0949">S-adenosyl-L-methionine</keyword>
<keyword id="KW-0808">Transferase</keyword>
<organism>
    <name type="scientific">Psychrobacter sp. (strain PRwf-1)</name>
    <dbReference type="NCBI Taxonomy" id="349106"/>
    <lineage>
        <taxon>Bacteria</taxon>
        <taxon>Pseudomonadati</taxon>
        <taxon>Pseudomonadota</taxon>
        <taxon>Gammaproteobacteria</taxon>
        <taxon>Moraxellales</taxon>
        <taxon>Moraxellaceae</taxon>
        <taxon>Psychrobacter</taxon>
    </lineage>
</organism>
<gene>
    <name evidence="1" type="primary">queA</name>
    <name type="ordered locus">PsycPRwf_1924</name>
</gene>
<evidence type="ECO:0000255" key="1">
    <source>
        <dbReference type="HAMAP-Rule" id="MF_00113"/>
    </source>
</evidence>
<evidence type="ECO:0000256" key="2">
    <source>
        <dbReference type="SAM" id="MobiDB-lite"/>
    </source>
</evidence>
<comment type="function">
    <text evidence="1">Transfers and isomerizes the ribose moiety from AdoMet to the 7-aminomethyl group of 7-deazaguanine (preQ1-tRNA) to give epoxyqueuosine (oQ-tRNA).</text>
</comment>
<comment type="catalytic activity">
    <reaction evidence="1">
        <text>7-aminomethyl-7-carbaguanosine(34) in tRNA + S-adenosyl-L-methionine = epoxyqueuosine(34) in tRNA + adenine + L-methionine + 2 H(+)</text>
        <dbReference type="Rhea" id="RHEA:32155"/>
        <dbReference type="Rhea" id="RHEA-COMP:10342"/>
        <dbReference type="Rhea" id="RHEA-COMP:18582"/>
        <dbReference type="ChEBI" id="CHEBI:15378"/>
        <dbReference type="ChEBI" id="CHEBI:16708"/>
        <dbReference type="ChEBI" id="CHEBI:57844"/>
        <dbReference type="ChEBI" id="CHEBI:59789"/>
        <dbReference type="ChEBI" id="CHEBI:82833"/>
        <dbReference type="ChEBI" id="CHEBI:194443"/>
        <dbReference type="EC" id="2.4.99.17"/>
    </reaction>
</comment>
<comment type="pathway">
    <text evidence="1">tRNA modification; tRNA-queuosine biosynthesis.</text>
</comment>
<comment type="subunit">
    <text evidence="1">Monomer.</text>
</comment>
<comment type="subcellular location">
    <subcellularLocation>
        <location evidence="1">Cytoplasm</location>
    </subcellularLocation>
</comment>
<comment type="similarity">
    <text evidence="1">Belongs to the QueA family.</text>
</comment>
<feature type="chain" id="PRO_1000071341" description="S-adenosylmethionine:tRNA ribosyltransferase-isomerase">
    <location>
        <begin position="1"/>
        <end position="390"/>
    </location>
</feature>
<feature type="region of interest" description="Disordered" evidence="2">
    <location>
        <begin position="1"/>
        <end position="22"/>
    </location>
</feature>
<accession>A5WGS3</accession>
<reference key="1">
    <citation type="submission" date="2007-05" db="EMBL/GenBank/DDBJ databases">
        <title>Complete sequence of chromosome of Psychrobacter sp. PRwf-1.</title>
        <authorList>
            <consortium name="US DOE Joint Genome Institute"/>
            <person name="Copeland A."/>
            <person name="Lucas S."/>
            <person name="Lapidus A."/>
            <person name="Barry K."/>
            <person name="Detter J.C."/>
            <person name="Glavina del Rio T."/>
            <person name="Hammon N."/>
            <person name="Israni S."/>
            <person name="Dalin E."/>
            <person name="Tice H."/>
            <person name="Pitluck S."/>
            <person name="Chain P."/>
            <person name="Malfatti S."/>
            <person name="Shin M."/>
            <person name="Vergez L."/>
            <person name="Schmutz J."/>
            <person name="Larimer F."/>
            <person name="Land M."/>
            <person name="Hauser L."/>
            <person name="Kyrpides N."/>
            <person name="Kim E."/>
            <person name="Tiedje J."/>
            <person name="Richardson P."/>
        </authorList>
    </citation>
    <scope>NUCLEOTIDE SEQUENCE [LARGE SCALE GENOMIC DNA]</scope>
    <source>
        <strain>PRwf-1</strain>
    </source>
</reference>
<protein>
    <recommendedName>
        <fullName evidence="1">S-adenosylmethionine:tRNA ribosyltransferase-isomerase</fullName>
        <ecNumber evidence="1">2.4.99.17</ecNumber>
    </recommendedName>
    <alternativeName>
        <fullName evidence="1">Queuosine biosynthesis protein QueA</fullName>
    </alternativeName>
</protein>
<dbReference type="EC" id="2.4.99.17" evidence="1"/>
<dbReference type="EMBL" id="CP000713">
    <property type="protein sequence ID" value="ABQ94864.1"/>
    <property type="molecule type" value="Genomic_DNA"/>
</dbReference>
<dbReference type="SMR" id="A5WGS3"/>
<dbReference type="STRING" id="349106.PsycPRwf_1924"/>
<dbReference type="KEGG" id="prw:PsycPRwf_1924"/>
<dbReference type="eggNOG" id="COG0809">
    <property type="taxonomic scope" value="Bacteria"/>
</dbReference>
<dbReference type="HOGENOM" id="CLU_039110_1_0_6"/>
<dbReference type="UniPathway" id="UPA00392"/>
<dbReference type="GO" id="GO:0005737">
    <property type="term" value="C:cytoplasm"/>
    <property type="evidence" value="ECO:0007669"/>
    <property type="project" value="UniProtKB-SubCell"/>
</dbReference>
<dbReference type="GO" id="GO:0051075">
    <property type="term" value="F:S-adenosylmethionine:tRNA ribosyltransferase-isomerase activity"/>
    <property type="evidence" value="ECO:0007669"/>
    <property type="project" value="UniProtKB-EC"/>
</dbReference>
<dbReference type="GO" id="GO:0008616">
    <property type="term" value="P:queuosine biosynthetic process"/>
    <property type="evidence" value="ECO:0007669"/>
    <property type="project" value="UniProtKB-UniRule"/>
</dbReference>
<dbReference type="GO" id="GO:0002099">
    <property type="term" value="P:tRNA wobble guanine modification"/>
    <property type="evidence" value="ECO:0007669"/>
    <property type="project" value="TreeGrafter"/>
</dbReference>
<dbReference type="FunFam" id="3.40.1780.10:FF:000001">
    <property type="entry name" value="S-adenosylmethionine:tRNA ribosyltransferase-isomerase"/>
    <property type="match status" value="1"/>
</dbReference>
<dbReference type="Gene3D" id="2.40.10.240">
    <property type="entry name" value="QueA-like"/>
    <property type="match status" value="1"/>
</dbReference>
<dbReference type="Gene3D" id="3.40.1780.10">
    <property type="entry name" value="QueA-like"/>
    <property type="match status" value="1"/>
</dbReference>
<dbReference type="HAMAP" id="MF_00113">
    <property type="entry name" value="QueA"/>
    <property type="match status" value="1"/>
</dbReference>
<dbReference type="InterPro" id="IPR003699">
    <property type="entry name" value="QueA"/>
</dbReference>
<dbReference type="InterPro" id="IPR042118">
    <property type="entry name" value="QueA_dom1"/>
</dbReference>
<dbReference type="InterPro" id="IPR042119">
    <property type="entry name" value="QueA_dom2"/>
</dbReference>
<dbReference type="InterPro" id="IPR036100">
    <property type="entry name" value="QueA_sf"/>
</dbReference>
<dbReference type="NCBIfam" id="NF001140">
    <property type="entry name" value="PRK00147.1"/>
    <property type="match status" value="1"/>
</dbReference>
<dbReference type="NCBIfam" id="TIGR00113">
    <property type="entry name" value="queA"/>
    <property type="match status" value="1"/>
</dbReference>
<dbReference type="PANTHER" id="PTHR30307">
    <property type="entry name" value="S-ADENOSYLMETHIONINE:TRNA RIBOSYLTRANSFERASE-ISOMERASE"/>
    <property type="match status" value="1"/>
</dbReference>
<dbReference type="PANTHER" id="PTHR30307:SF0">
    <property type="entry name" value="S-ADENOSYLMETHIONINE:TRNA RIBOSYLTRANSFERASE-ISOMERASE"/>
    <property type="match status" value="1"/>
</dbReference>
<dbReference type="Pfam" id="PF02547">
    <property type="entry name" value="Queuosine_synth"/>
    <property type="match status" value="1"/>
</dbReference>
<dbReference type="SUPFAM" id="SSF111337">
    <property type="entry name" value="QueA-like"/>
    <property type="match status" value="1"/>
</dbReference>